<gene>
    <name evidence="1" type="primary">murC</name>
    <name type="ordered locus">NE0992</name>
</gene>
<organism>
    <name type="scientific">Nitrosomonas europaea (strain ATCC 19718 / CIP 103999 / KCTC 2705 / NBRC 14298)</name>
    <dbReference type="NCBI Taxonomy" id="228410"/>
    <lineage>
        <taxon>Bacteria</taxon>
        <taxon>Pseudomonadati</taxon>
        <taxon>Pseudomonadota</taxon>
        <taxon>Betaproteobacteria</taxon>
        <taxon>Nitrosomonadales</taxon>
        <taxon>Nitrosomonadaceae</taxon>
        <taxon>Nitrosomonas</taxon>
    </lineage>
</organism>
<dbReference type="EC" id="6.3.2.8" evidence="1"/>
<dbReference type="EMBL" id="AL954747">
    <property type="protein sequence ID" value="CAD84903.1"/>
    <property type="molecule type" value="Genomic_DNA"/>
</dbReference>
<dbReference type="RefSeq" id="WP_011111601.1">
    <property type="nucleotide sequence ID" value="NC_004757.1"/>
</dbReference>
<dbReference type="SMR" id="Q82VS2"/>
<dbReference type="STRING" id="228410.NE0992"/>
<dbReference type="GeneID" id="87104183"/>
<dbReference type="KEGG" id="neu:NE0992"/>
<dbReference type="eggNOG" id="COG0773">
    <property type="taxonomic scope" value="Bacteria"/>
</dbReference>
<dbReference type="HOGENOM" id="CLU_028104_2_2_4"/>
<dbReference type="OrthoDB" id="9804126at2"/>
<dbReference type="PhylomeDB" id="Q82VS2"/>
<dbReference type="UniPathway" id="UPA00219"/>
<dbReference type="Proteomes" id="UP000001416">
    <property type="component" value="Chromosome"/>
</dbReference>
<dbReference type="GO" id="GO:0005737">
    <property type="term" value="C:cytoplasm"/>
    <property type="evidence" value="ECO:0007669"/>
    <property type="project" value="UniProtKB-SubCell"/>
</dbReference>
<dbReference type="GO" id="GO:0005524">
    <property type="term" value="F:ATP binding"/>
    <property type="evidence" value="ECO:0007669"/>
    <property type="project" value="UniProtKB-UniRule"/>
</dbReference>
<dbReference type="GO" id="GO:0008763">
    <property type="term" value="F:UDP-N-acetylmuramate-L-alanine ligase activity"/>
    <property type="evidence" value="ECO:0007669"/>
    <property type="project" value="UniProtKB-UniRule"/>
</dbReference>
<dbReference type="GO" id="GO:0051301">
    <property type="term" value="P:cell division"/>
    <property type="evidence" value="ECO:0007669"/>
    <property type="project" value="UniProtKB-KW"/>
</dbReference>
<dbReference type="GO" id="GO:0071555">
    <property type="term" value="P:cell wall organization"/>
    <property type="evidence" value="ECO:0007669"/>
    <property type="project" value="UniProtKB-KW"/>
</dbReference>
<dbReference type="GO" id="GO:0009252">
    <property type="term" value="P:peptidoglycan biosynthetic process"/>
    <property type="evidence" value="ECO:0007669"/>
    <property type="project" value="UniProtKB-UniRule"/>
</dbReference>
<dbReference type="GO" id="GO:0008360">
    <property type="term" value="P:regulation of cell shape"/>
    <property type="evidence" value="ECO:0007669"/>
    <property type="project" value="UniProtKB-KW"/>
</dbReference>
<dbReference type="Gene3D" id="3.90.190.20">
    <property type="entry name" value="Mur ligase, C-terminal domain"/>
    <property type="match status" value="1"/>
</dbReference>
<dbReference type="Gene3D" id="3.40.1190.10">
    <property type="entry name" value="Mur-like, catalytic domain"/>
    <property type="match status" value="1"/>
</dbReference>
<dbReference type="Gene3D" id="3.40.50.720">
    <property type="entry name" value="NAD(P)-binding Rossmann-like Domain"/>
    <property type="match status" value="1"/>
</dbReference>
<dbReference type="HAMAP" id="MF_00046">
    <property type="entry name" value="MurC"/>
    <property type="match status" value="1"/>
</dbReference>
<dbReference type="InterPro" id="IPR036565">
    <property type="entry name" value="Mur-like_cat_sf"/>
</dbReference>
<dbReference type="InterPro" id="IPR004101">
    <property type="entry name" value="Mur_ligase_C"/>
</dbReference>
<dbReference type="InterPro" id="IPR036615">
    <property type="entry name" value="Mur_ligase_C_dom_sf"/>
</dbReference>
<dbReference type="InterPro" id="IPR013221">
    <property type="entry name" value="Mur_ligase_cen"/>
</dbReference>
<dbReference type="InterPro" id="IPR000713">
    <property type="entry name" value="Mur_ligase_N"/>
</dbReference>
<dbReference type="InterPro" id="IPR050061">
    <property type="entry name" value="MurCDEF_pg_biosynth"/>
</dbReference>
<dbReference type="InterPro" id="IPR005758">
    <property type="entry name" value="UDP-N-AcMur_Ala_ligase_MurC"/>
</dbReference>
<dbReference type="NCBIfam" id="TIGR01082">
    <property type="entry name" value="murC"/>
    <property type="match status" value="1"/>
</dbReference>
<dbReference type="PANTHER" id="PTHR43445:SF3">
    <property type="entry name" value="UDP-N-ACETYLMURAMATE--L-ALANINE LIGASE"/>
    <property type="match status" value="1"/>
</dbReference>
<dbReference type="PANTHER" id="PTHR43445">
    <property type="entry name" value="UDP-N-ACETYLMURAMATE--L-ALANINE LIGASE-RELATED"/>
    <property type="match status" value="1"/>
</dbReference>
<dbReference type="Pfam" id="PF01225">
    <property type="entry name" value="Mur_ligase"/>
    <property type="match status" value="1"/>
</dbReference>
<dbReference type="Pfam" id="PF02875">
    <property type="entry name" value="Mur_ligase_C"/>
    <property type="match status" value="1"/>
</dbReference>
<dbReference type="Pfam" id="PF08245">
    <property type="entry name" value="Mur_ligase_M"/>
    <property type="match status" value="1"/>
</dbReference>
<dbReference type="SUPFAM" id="SSF51984">
    <property type="entry name" value="MurCD N-terminal domain"/>
    <property type="match status" value="1"/>
</dbReference>
<dbReference type="SUPFAM" id="SSF53623">
    <property type="entry name" value="MurD-like peptide ligases, catalytic domain"/>
    <property type="match status" value="1"/>
</dbReference>
<dbReference type="SUPFAM" id="SSF53244">
    <property type="entry name" value="MurD-like peptide ligases, peptide-binding domain"/>
    <property type="match status" value="1"/>
</dbReference>
<protein>
    <recommendedName>
        <fullName evidence="1">UDP-N-acetylmuramate--L-alanine ligase</fullName>
        <ecNumber evidence="1">6.3.2.8</ecNumber>
    </recommendedName>
    <alternativeName>
        <fullName evidence="1">UDP-N-acetylmuramoyl-L-alanine synthetase</fullName>
    </alternativeName>
</protein>
<proteinExistence type="inferred from homology"/>
<reference key="1">
    <citation type="journal article" date="2003" name="J. Bacteriol.">
        <title>Complete genome sequence of the ammonia-oxidizing bacterium and obligate chemolithoautotroph Nitrosomonas europaea.</title>
        <authorList>
            <person name="Chain P."/>
            <person name="Lamerdin J.E."/>
            <person name="Larimer F.W."/>
            <person name="Regala W."/>
            <person name="Lao V."/>
            <person name="Land M.L."/>
            <person name="Hauser L."/>
            <person name="Hooper A.B."/>
            <person name="Klotz M.G."/>
            <person name="Norton J."/>
            <person name="Sayavedra-Soto L.A."/>
            <person name="Arciero D.M."/>
            <person name="Hommes N.G."/>
            <person name="Whittaker M.M."/>
            <person name="Arp D.J."/>
        </authorList>
    </citation>
    <scope>NUCLEOTIDE SEQUENCE [LARGE SCALE GENOMIC DNA]</scope>
    <source>
        <strain>ATCC 19718 / CIP 103999 / KCTC 2705 / NBRC 14298</strain>
    </source>
</reference>
<comment type="function">
    <text evidence="1">Cell wall formation.</text>
</comment>
<comment type="catalytic activity">
    <reaction evidence="1">
        <text>UDP-N-acetyl-alpha-D-muramate + L-alanine + ATP = UDP-N-acetyl-alpha-D-muramoyl-L-alanine + ADP + phosphate + H(+)</text>
        <dbReference type="Rhea" id="RHEA:23372"/>
        <dbReference type="ChEBI" id="CHEBI:15378"/>
        <dbReference type="ChEBI" id="CHEBI:30616"/>
        <dbReference type="ChEBI" id="CHEBI:43474"/>
        <dbReference type="ChEBI" id="CHEBI:57972"/>
        <dbReference type="ChEBI" id="CHEBI:70757"/>
        <dbReference type="ChEBI" id="CHEBI:83898"/>
        <dbReference type="ChEBI" id="CHEBI:456216"/>
        <dbReference type="EC" id="6.3.2.8"/>
    </reaction>
</comment>
<comment type="pathway">
    <text evidence="1">Cell wall biogenesis; peptidoglycan biosynthesis.</text>
</comment>
<comment type="subcellular location">
    <subcellularLocation>
        <location evidence="1">Cytoplasm</location>
    </subcellularLocation>
</comment>
<comment type="similarity">
    <text evidence="1">Belongs to the MurCDEF family.</text>
</comment>
<sequence>MKHKIRHIHFVGIGGSGMGGIAEVLINLGFQISGSDMHSNSTTRRLQCLGAVIHHTHAAENIQSADAVVISTAIHSDNPEVIAARERRIPVVPRAMMLAELLRLRRGIAIAGTHGKTTTTSLVASILAEAGQDPTFVIGGKLKTVDSHARLGKGEFIVVEADESDASFLYLQPVLTVVTNIDADHMSTYEHDFNRLKQTFVEFIEHLPFYGMAVLCVDDPHVREIISMITRPVTTYGIASEDAQICATNIRHDRCRMHFLAHIGVNGSPRTLEVTLNLPGKHNVLNALAAIAVGNELGVPDEAIVKALATFGGVDRRFQQYGEIPLPDQGSFALIDDYGHHPAEIAATMAAARNAFPGRRLVLAFQPHRYSRTRDLFEDFVRVLSGADVLLLTEVYPAGEEPIIAADSKSLARAIRVQGKIEPIYIEQIDELKATIHTIAQDGDVILIMGAGSIGKSAPDLAEPAMKLTLITG</sequence>
<name>MURC_NITEU</name>
<keyword id="KW-0067">ATP-binding</keyword>
<keyword id="KW-0131">Cell cycle</keyword>
<keyword id="KW-0132">Cell division</keyword>
<keyword id="KW-0133">Cell shape</keyword>
<keyword id="KW-0961">Cell wall biogenesis/degradation</keyword>
<keyword id="KW-0963">Cytoplasm</keyword>
<keyword id="KW-0436">Ligase</keyword>
<keyword id="KW-0547">Nucleotide-binding</keyword>
<keyword id="KW-0573">Peptidoglycan synthesis</keyword>
<keyword id="KW-1185">Reference proteome</keyword>
<accession>Q82VS2</accession>
<feature type="chain" id="PRO_0000182123" description="UDP-N-acetylmuramate--L-alanine ligase">
    <location>
        <begin position="1"/>
        <end position="473"/>
    </location>
</feature>
<feature type="binding site" evidence="1">
    <location>
        <begin position="112"/>
        <end position="118"/>
    </location>
    <ligand>
        <name>ATP</name>
        <dbReference type="ChEBI" id="CHEBI:30616"/>
    </ligand>
</feature>
<evidence type="ECO:0000255" key="1">
    <source>
        <dbReference type="HAMAP-Rule" id="MF_00046"/>
    </source>
</evidence>